<keyword id="KW-0058">Aromatic hydrocarbons catabolism</keyword>
<keyword id="KW-0456">Lyase</keyword>
<keyword id="KW-0464">Manganese</keyword>
<keyword id="KW-0479">Metal-binding</keyword>
<keyword id="KW-1185">Reference proteome</keyword>
<proteinExistence type="inferred from homology"/>
<comment type="catalytic activity">
    <reaction evidence="1">
        <text>(S)-4-hydroxy-2-oxopentanoate = acetaldehyde + pyruvate</text>
        <dbReference type="Rhea" id="RHEA:22624"/>
        <dbReference type="ChEBI" id="CHEBI:15343"/>
        <dbReference type="ChEBI" id="CHEBI:15361"/>
        <dbReference type="ChEBI" id="CHEBI:73143"/>
        <dbReference type="EC" id="4.1.3.39"/>
    </reaction>
</comment>
<comment type="similarity">
    <text evidence="1">Belongs to the 4-hydroxy-2-oxovalerate aldolase family.</text>
</comment>
<organism>
    <name type="scientific">Pelotomaculum thermopropionicum (strain DSM 13744 / JCM 10971 / SI)</name>
    <dbReference type="NCBI Taxonomy" id="370438"/>
    <lineage>
        <taxon>Bacteria</taxon>
        <taxon>Bacillati</taxon>
        <taxon>Bacillota</taxon>
        <taxon>Clostridia</taxon>
        <taxon>Eubacteriales</taxon>
        <taxon>Desulfotomaculaceae</taxon>
        <taxon>Pelotomaculum</taxon>
    </lineage>
</organism>
<dbReference type="EC" id="4.1.3.39" evidence="1"/>
<dbReference type="EMBL" id="AP009389">
    <property type="protein sequence ID" value="BAF58664.1"/>
    <property type="molecule type" value="Genomic_DNA"/>
</dbReference>
<dbReference type="SMR" id="A5D523"/>
<dbReference type="STRING" id="370438.PTH_0483"/>
<dbReference type="KEGG" id="pth:PTH_0483"/>
<dbReference type="eggNOG" id="COG0119">
    <property type="taxonomic scope" value="Bacteria"/>
</dbReference>
<dbReference type="HOGENOM" id="CLU_049173_0_0_9"/>
<dbReference type="Proteomes" id="UP000006556">
    <property type="component" value="Chromosome"/>
</dbReference>
<dbReference type="GO" id="GO:0003852">
    <property type="term" value="F:2-isopropylmalate synthase activity"/>
    <property type="evidence" value="ECO:0007669"/>
    <property type="project" value="TreeGrafter"/>
</dbReference>
<dbReference type="GO" id="GO:0008701">
    <property type="term" value="F:4-hydroxy-2-oxovalerate aldolase activity"/>
    <property type="evidence" value="ECO:0007669"/>
    <property type="project" value="UniProtKB-UniRule"/>
</dbReference>
<dbReference type="GO" id="GO:0030145">
    <property type="term" value="F:manganese ion binding"/>
    <property type="evidence" value="ECO:0007669"/>
    <property type="project" value="UniProtKB-UniRule"/>
</dbReference>
<dbReference type="GO" id="GO:0009056">
    <property type="term" value="P:catabolic process"/>
    <property type="evidence" value="ECO:0007669"/>
    <property type="project" value="UniProtKB-KW"/>
</dbReference>
<dbReference type="GO" id="GO:0009098">
    <property type="term" value="P:L-leucine biosynthetic process"/>
    <property type="evidence" value="ECO:0007669"/>
    <property type="project" value="TreeGrafter"/>
</dbReference>
<dbReference type="CDD" id="cd07943">
    <property type="entry name" value="DRE_TIM_HOA"/>
    <property type="match status" value="1"/>
</dbReference>
<dbReference type="Gene3D" id="1.10.8.60">
    <property type="match status" value="1"/>
</dbReference>
<dbReference type="Gene3D" id="3.20.20.70">
    <property type="entry name" value="Aldolase class I"/>
    <property type="match status" value="1"/>
</dbReference>
<dbReference type="HAMAP" id="MF_01656">
    <property type="entry name" value="HOA"/>
    <property type="match status" value="1"/>
</dbReference>
<dbReference type="InterPro" id="IPR050073">
    <property type="entry name" value="2-IPM_HCS-like"/>
</dbReference>
<dbReference type="InterPro" id="IPR017629">
    <property type="entry name" value="4OH_2_O-val_aldolase"/>
</dbReference>
<dbReference type="InterPro" id="IPR013785">
    <property type="entry name" value="Aldolase_TIM"/>
</dbReference>
<dbReference type="InterPro" id="IPR012425">
    <property type="entry name" value="DmpG_comm"/>
</dbReference>
<dbReference type="InterPro" id="IPR035685">
    <property type="entry name" value="DRE_TIM_HOA"/>
</dbReference>
<dbReference type="InterPro" id="IPR000891">
    <property type="entry name" value="PYR_CT"/>
</dbReference>
<dbReference type="NCBIfam" id="TIGR03217">
    <property type="entry name" value="4OH_2_O_val_ald"/>
    <property type="match status" value="1"/>
</dbReference>
<dbReference type="NCBIfam" id="NF006049">
    <property type="entry name" value="PRK08195.1"/>
    <property type="match status" value="1"/>
</dbReference>
<dbReference type="PANTHER" id="PTHR10277:SF9">
    <property type="entry name" value="2-ISOPROPYLMALATE SYNTHASE 1, CHLOROPLASTIC-RELATED"/>
    <property type="match status" value="1"/>
</dbReference>
<dbReference type="PANTHER" id="PTHR10277">
    <property type="entry name" value="HOMOCITRATE SYNTHASE-RELATED"/>
    <property type="match status" value="1"/>
</dbReference>
<dbReference type="Pfam" id="PF07836">
    <property type="entry name" value="DmpG_comm"/>
    <property type="match status" value="1"/>
</dbReference>
<dbReference type="Pfam" id="PF00682">
    <property type="entry name" value="HMGL-like"/>
    <property type="match status" value="1"/>
</dbReference>
<dbReference type="SUPFAM" id="SSF51569">
    <property type="entry name" value="Aldolase"/>
    <property type="match status" value="1"/>
</dbReference>
<dbReference type="SUPFAM" id="SSF89000">
    <property type="entry name" value="post-HMGL domain-like"/>
    <property type="match status" value="1"/>
</dbReference>
<dbReference type="PROSITE" id="PS50991">
    <property type="entry name" value="PYR_CT"/>
    <property type="match status" value="1"/>
</dbReference>
<evidence type="ECO:0000255" key="1">
    <source>
        <dbReference type="HAMAP-Rule" id="MF_01656"/>
    </source>
</evidence>
<reference key="1">
    <citation type="journal article" date="2008" name="Genome Res.">
        <title>The genome of Pelotomaculum thermopropionicum reveals niche-associated evolution in anaerobic microbiota.</title>
        <authorList>
            <person name="Kosaka T."/>
            <person name="Kato S."/>
            <person name="Shimoyama T."/>
            <person name="Ishii S."/>
            <person name="Abe T."/>
            <person name="Watanabe K."/>
        </authorList>
    </citation>
    <scope>NUCLEOTIDE SEQUENCE [LARGE SCALE GENOMIC DNA]</scope>
    <source>
        <strain>DSM 13744 / JCM 10971 / SI</strain>
    </source>
</reference>
<gene>
    <name type="ordered locus">PTH_0483</name>
</gene>
<feature type="chain" id="PRO_0000387876" description="4-hydroxy-2-oxovalerate aldolase">
    <location>
        <begin position="1"/>
        <end position="339"/>
    </location>
</feature>
<feature type="domain" description="Pyruvate carboxyltransferase" evidence="1">
    <location>
        <begin position="7"/>
        <end position="257"/>
    </location>
</feature>
<feature type="active site" description="Proton acceptor" evidence="1">
    <location>
        <position position="19"/>
    </location>
</feature>
<feature type="binding site" evidence="1">
    <location>
        <begin position="15"/>
        <end position="16"/>
    </location>
    <ligand>
        <name>substrate</name>
    </ligand>
</feature>
<feature type="binding site" evidence="1">
    <location>
        <position position="16"/>
    </location>
    <ligand>
        <name>Mn(2+)</name>
        <dbReference type="ChEBI" id="CHEBI:29035"/>
    </ligand>
</feature>
<feature type="binding site" evidence="1">
    <location>
        <position position="169"/>
    </location>
    <ligand>
        <name>substrate</name>
    </ligand>
</feature>
<feature type="binding site" evidence="1">
    <location>
        <position position="196"/>
    </location>
    <ligand>
        <name>Mn(2+)</name>
        <dbReference type="ChEBI" id="CHEBI:29035"/>
    </ligand>
</feature>
<feature type="binding site" evidence="1">
    <location>
        <position position="196"/>
    </location>
    <ligand>
        <name>substrate</name>
    </ligand>
</feature>
<feature type="binding site" evidence="1">
    <location>
        <position position="198"/>
    </location>
    <ligand>
        <name>Mn(2+)</name>
        <dbReference type="ChEBI" id="CHEBI:29035"/>
    </ligand>
</feature>
<feature type="binding site" evidence="1">
    <location>
        <position position="286"/>
    </location>
    <ligand>
        <name>substrate</name>
    </ligand>
</feature>
<feature type="site" description="Transition state stabilizer" evidence="1">
    <location>
        <position position="15"/>
    </location>
</feature>
<protein>
    <recommendedName>
        <fullName evidence="1">4-hydroxy-2-oxovalerate aldolase</fullName>
        <shortName evidence="1">HOA</shortName>
        <ecNumber evidence="1">4.1.3.39</ecNumber>
    </recommendedName>
    <alternativeName>
        <fullName evidence="1">4-hydroxy-2-keto-pentanoic acid aldolase</fullName>
    </alternativeName>
    <alternativeName>
        <fullName evidence="1">4-hydroxy-2-oxopentanoate aldolase</fullName>
    </alternativeName>
</protein>
<name>HOA_PELTS</name>
<accession>A5D523</accession>
<sequence>MIAVPEIRIMDTTLRDGMHAMAHQFTPEQMAQVAAALDEAGVDVIEVTHGDGLAGSSFQYGFAAATDEEYLEAVAPVLKKAKLAALILPGIGTCRDMRMAVQAGVKVFRIATHVTEADISEEHMGLAKEMGAEVVGFLMMSHTVGKEKIAEQAKLMESYGADVVYMVDSAGAMIPPEVTEKIGYLKEVLNIPVGFHAHNNLGLAVGNTLAAVAAGATAVDGTLRGLGAGAGNTSTEVLVAALKKAGYQVGVDLYKIMDAATVLEPMMRRPQVIDNASIILGYAGVYSSFLLHTYRAAERFGLDPRDILMELGRRKVVGGQEDYIVDVAYEMSRNKSRAV</sequence>